<name>NUOI_LEPBJ</name>
<protein>
    <recommendedName>
        <fullName evidence="1">NADH-quinone oxidoreductase subunit I</fullName>
        <ecNumber evidence="1">7.1.1.-</ecNumber>
    </recommendedName>
    <alternativeName>
        <fullName evidence="1">NADH dehydrogenase I subunit I</fullName>
    </alternativeName>
    <alternativeName>
        <fullName evidence="1">NDH-1 subunit I</fullName>
    </alternativeName>
</protein>
<keyword id="KW-0004">4Fe-4S</keyword>
<keyword id="KW-0997">Cell inner membrane</keyword>
<keyword id="KW-1003">Cell membrane</keyword>
<keyword id="KW-0408">Iron</keyword>
<keyword id="KW-0411">Iron-sulfur</keyword>
<keyword id="KW-0472">Membrane</keyword>
<keyword id="KW-0479">Metal-binding</keyword>
<keyword id="KW-0520">NAD</keyword>
<keyword id="KW-0874">Quinone</keyword>
<keyword id="KW-0677">Repeat</keyword>
<keyword id="KW-1278">Translocase</keyword>
<keyword id="KW-0830">Ubiquinone</keyword>
<accession>Q04W38</accession>
<organism>
    <name type="scientific">Leptospira borgpetersenii serovar Hardjo-bovis (strain JB197)</name>
    <dbReference type="NCBI Taxonomy" id="355277"/>
    <lineage>
        <taxon>Bacteria</taxon>
        <taxon>Pseudomonadati</taxon>
        <taxon>Spirochaetota</taxon>
        <taxon>Spirochaetia</taxon>
        <taxon>Leptospirales</taxon>
        <taxon>Leptospiraceae</taxon>
        <taxon>Leptospira</taxon>
    </lineage>
</organism>
<dbReference type="EC" id="7.1.1.-" evidence="1"/>
<dbReference type="EMBL" id="CP000350">
    <property type="protein sequence ID" value="ABJ74882.1"/>
    <property type="molecule type" value="Genomic_DNA"/>
</dbReference>
<dbReference type="RefSeq" id="WP_011671454.1">
    <property type="nucleotide sequence ID" value="NC_008510.1"/>
</dbReference>
<dbReference type="SMR" id="Q04W38"/>
<dbReference type="KEGG" id="lbj:LBJ_0138"/>
<dbReference type="HOGENOM" id="CLU_067218_4_3_12"/>
<dbReference type="Proteomes" id="UP000000656">
    <property type="component" value="Chromosome 1"/>
</dbReference>
<dbReference type="GO" id="GO:0005886">
    <property type="term" value="C:plasma membrane"/>
    <property type="evidence" value="ECO:0007669"/>
    <property type="project" value="UniProtKB-SubCell"/>
</dbReference>
<dbReference type="GO" id="GO:0051539">
    <property type="term" value="F:4 iron, 4 sulfur cluster binding"/>
    <property type="evidence" value="ECO:0007669"/>
    <property type="project" value="UniProtKB-KW"/>
</dbReference>
<dbReference type="GO" id="GO:0005506">
    <property type="term" value="F:iron ion binding"/>
    <property type="evidence" value="ECO:0007669"/>
    <property type="project" value="UniProtKB-UniRule"/>
</dbReference>
<dbReference type="GO" id="GO:0050136">
    <property type="term" value="F:NADH:ubiquinone reductase (non-electrogenic) activity"/>
    <property type="evidence" value="ECO:0007669"/>
    <property type="project" value="UniProtKB-UniRule"/>
</dbReference>
<dbReference type="GO" id="GO:0048038">
    <property type="term" value="F:quinone binding"/>
    <property type="evidence" value="ECO:0007669"/>
    <property type="project" value="UniProtKB-KW"/>
</dbReference>
<dbReference type="GO" id="GO:0009060">
    <property type="term" value="P:aerobic respiration"/>
    <property type="evidence" value="ECO:0007669"/>
    <property type="project" value="TreeGrafter"/>
</dbReference>
<dbReference type="FunFam" id="3.30.70.3270:FF:000009">
    <property type="entry name" value="NADH-quinone oxidoreductase subunit I"/>
    <property type="match status" value="1"/>
</dbReference>
<dbReference type="Gene3D" id="3.30.70.3270">
    <property type="match status" value="1"/>
</dbReference>
<dbReference type="HAMAP" id="MF_01351">
    <property type="entry name" value="NDH1_NuoI"/>
    <property type="match status" value="1"/>
</dbReference>
<dbReference type="InterPro" id="IPR017896">
    <property type="entry name" value="4Fe4S_Fe-S-bd"/>
</dbReference>
<dbReference type="InterPro" id="IPR017900">
    <property type="entry name" value="4Fe4S_Fe_S_CS"/>
</dbReference>
<dbReference type="InterPro" id="IPR010226">
    <property type="entry name" value="NADH_quinone_OxRdtase_chainI"/>
</dbReference>
<dbReference type="NCBIfam" id="TIGR01971">
    <property type="entry name" value="NuoI"/>
    <property type="match status" value="1"/>
</dbReference>
<dbReference type="PANTHER" id="PTHR10849:SF20">
    <property type="entry name" value="NADH DEHYDROGENASE [UBIQUINONE] IRON-SULFUR PROTEIN 8, MITOCHONDRIAL"/>
    <property type="match status" value="1"/>
</dbReference>
<dbReference type="PANTHER" id="PTHR10849">
    <property type="entry name" value="NADH DEHYDROGENASE UBIQUINONE IRON-SULFUR PROTEIN 8, MITOCHONDRIAL"/>
    <property type="match status" value="1"/>
</dbReference>
<dbReference type="Pfam" id="PF00037">
    <property type="entry name" value="Fer4"/>
    <property type="match status" value="1"/>
</dbReference>
<dbReference type="SUPFAM" id="SSF54862">
    <property type="entry name" value="4Fe-4S ferredoxins"/>
    <property type="match status" value="1"/>
</dbReference>
<dbReference type="PROSITE" id="PS00198">
    <property type="entry name" value="4FE4S_FER_1"/>
    <property type="match status" value="2"/>
</dbReference>
<dbReference type="PROSITE" id="PS51379">
    <property type="entry name" value="4FE4S_FER_2"/>
    <property type="match status" value="2"/>
</dbReference>
<comment type="function">
    <text evidence="1">NDH-1 shuttles electrons from NADH, via FMN and iron-sulfur (Fe-S) centers, to quinones in the respiratory chain. The immediate electron acceptor for the enzyme in this species is believed to be ubiquinone. Couples the redox reaction to proton translocation (for every two electrons transferred, four hydrogen ions are translocated across the cytoplasmic membrane), and thus conserves the redox energy in a proton gradient.</text>
</comment>
<comment type="catalytic activity">
    <reaction evidence="1">
        <text>a quinone + NADH + 5 H(+)(in) = a quinol + NAD(+) + 4 H(+)(out)</text>
        <dbReference type="Rhea" id="RHEA:57888"/>
        <dbReference type="ChEBI" id="CHEBI:15378"/>
        <dbReference type="ChEBI" id="CHEBI:24646"/>
        <dbReference type="ChEBI" id="CHEBI:57540"/>
        <dbReference type="ChEBI" id="CHEBI:57945"/>
        <dbReference type="ChEBI" id="CHEBI:132124"/>
    </reaction>
</comment>
<comment type="cofactor">
    <cofactor evidence="1">
        <name>[4Fe-4S] cluster</name>
        <dbReference type="ChEBI" id="CHEBI:49883"/>
    </cofactor>
    <text evidence="1">Binds 2 [4Fe-4S] clusters per subunit.</text>
</comment>
<comment type="subunit">
    <text evidence="1">NDH-1 is composed of 14 different subunits. Subunits NuoA, H, J, K, L, M, N constitute the membrane sector of the complex.</text>
</comment>
<comment type="subcellular location">
    <subcellularLocation>
        <location evidence="1">Cell inner membrane</location>
        <topology evidence="1">Peripheral membrane protein</topology>
    </subcellularLocation>
</comment>
<comment type="similarity">
    <text evidence="1">Belongs to the complex I 23 kDa subunit family.</text>
</comment>
<gene>
    <name evidence="1" type="primary">nuoI</name>
    <name type="ordered locus">LBJ_0138</name>
</gene>
<proteinExistence type="inferred from homology"/>
<reference key="1">
    <citation type="journal article" date="2006" name="Proc. Natl. Acad. Sci. U.S.A.">
        <title>Genome reduction in Leptospira borgpetersenii reflects limited transmission potential.</title>
        <authorList>
            <person name="Bulach D.M."/>
            <person name="Zuerner R.L."/>
            <person name="Wilson P."/>
            <person name="Seemann T."/>
            <person name="McGrath A."/>
            <person name="Cullen P.A."/>
            <person name="Davis J."/>
            <person name="Johnson M."/>
            <person name="Kuczek E."/>
            <person name="Alt D.P."/>
            <person name="Peterson-Burch B."/>
            <person name="Coppel R.L."/>
            <person name="Rood J.I."/>
            <person name="Davies J.K."/>
            <person name="Adler B."/>
        </authorList>
    </citation>
    <scope>NUCLEOTIDE SEQUENCE [LARGE SCALE GENOMIC DNA]</scope>
    <source>
        <strain>JB197</strain>
    </source>
</reference>
<feature type="chain" id="PRO_0000298505" description="NADH-quinone oxidoreductase subunit I">
    <location>
        <begin position="1"/>
        <end position="175"/>
    </location>
</feature>
<feature type="domain" description="4Fe-4S ferredoxin-type 1" evidence="1">
    <location>
        <begin position="69"/>
        <end position="98"/>
    </location>
</feature>
<feature type="domain" description="4Fe-4S ferredoxin-type 2" evidence="1">
    <location>
        <begin position="115"/>
        <end position="144"/>
    </location>
</feature>
<feature type="binding site" evidence="1">
    <location>
        <position position="78"/>
    </location>
    <ligand>
        <name>[4Fe-4S] cluster</name>
        <dbReference type="ChEBI" id="CHEBI:49883"/>
        <label>1</label>
    </ligand>
</feature>
<feature type="binding site" evidence="1">
    <location>
        <position position="81"/>
    </location>
    <ligand>
        <name>[4Fe-4S] cluster</name>
        <dbReference type="ChEBI" id="CHEBI:49883"/>
        <label>1</label>
    </ligand>
</feature>
<feature type="binding site" evidence="1">
    <location>
        <position position="84"/>
    </location>
    <ligand>
        <name>[4Fe-4S] cluster</name>
        <dbReference type="ChEBI" id="CHEBI:49883"/>
        <label>1</label>
    </ligand>
</feature>
<feature type="binding site" evidence="1">
    <location>
        <position position="88"/>
    </location>
    <ligand>
        <name>[4Fe-4S] cluster</name>
        <dbReference type="ChEBI" id="CHEBI:49883"/>
        <label>2</label>
    </ligand>
</feature>
<feature type="binding site" evidence="1">
    <location>
        <position position="124"/>
    </location>
    <ligand>
        <name>[4Fe-4S] cluster</name>
        <dbReference type="ChEBI" id="CHEBI:49883"/>
        <label>2</label>
    </ligand>
</feature>
<feature type="binding site" evidence="1">
    <location>
        <position position="127"/>
    </location>
    <ligand>
        <name>[4Fe-4S] cluster</name>
        <dbReference type="ChEBI" id="CHEBI:49883"/>
        <label>2</label>
    </ligand>
</feature>
<feature type="binding site" evidence="1">
    <location>
        <position position="130"/>
    </location>
    <ligand>
        <name>[4Fe-4S] cluster</name>
        <dbReference type="ChEBI" id="CHEBI:49883"/>
        <label>2</label>
    </ligand>
</feature>
<feature type="binding site" evidence="1">
    <location>
        <position position="134"/>
    </location>
    <ligand>
        <name>[4Fe-4S] cluster</name>
        <dbReference type="ChEBI" id="CHEBI:49883"/>
        <label>1</label>
    </ligand>
</feature>
<sequence>MGTVNVVRVVSLHKLSWYEKFYFYSIGKGLWITLKHFIKAAILRRTVTIEYPEKKRKYSTRFRGMHTMKRDEQGRERCTSCFCCMWICPADAIYIEAGEVVPEIQHLHPEDKYAKKFEIDLLRCIFCGMCEEACPKGAIYLDGPGEMATDSREDLILTKERMMQIVGGPIIGERQ</sequence>
<evidence type="ECO:0000255" key="1">
    <source>
        <dbReference type="HAMAP-Rule" id="MF_01351"/>
    </source>
</evidence>